<reference key="1">
    <citation type="journal article" date="2005" name="Arch. Microbiol.">
        <title>The genome sequence of an anaerobic aromatic-degrading denitrifying bacterium, strain EbN1.</title>
        <authorList>
            <person name="Rabus R."/>
            <person name="Kube M."/>
            <person name="Heider J."/>
            <person name="Beck A."/>
            <person name="Heitmann K."/>
            <person name="Widdel F."/>
            <person name="Reinhardt R."/>
        </authorList>
    </citation>
    <scope>NUCLEOTIDE SEQUENCE [LARGE SCALE GENOMIC DNA]</scope>
    <source>
        <strain>DSM 19018 / LMG 30748 / EbN1</strain>
    </source>
</reference>
<accession>Q5NZH2</accession>
<proteinExistence type="inferred from homology"/>
<protein>
    <recommendedName>
        <fullName evidence="1">Ribosome-recycling factor</fullName>
        <shortName evidence="1">RRF</shortName>
    </recommendedName>
    <alternativeName>
        <fullName evidence="1">Ribosome-releasing factor</fullName>
    </alternativeName>
</protein>
<organism>
    <name type="scientific">Aromatoleum aromaticum (strain DSM 19018 / LMG 30748 / EbN1)</name>
    <name type="common">Azoarcus sp. (strain EbN1)</name>
    <dbReference type="NCBI Taxonomy" id="76114"/>
    <lineage>
        <taxon>Bacteria</taxon>
        <taxon>Pseudomonadati</taxon>
        <taxon>Pseudomonadota</taxon>
        <taxon>Betaproteobacteria</taxon>
        <taxon>Rhodocyclales</taxon>
        <taxon>Rhodocyclaceae</taxon>
        <taxon>Aromatoleum</taxon>
    </lineage>
</organism>
<gene>
    <name evidence="1" type="primary">frr</name>
    <name type="ordered locus">AZOSEA34170</name>
    <name type="ORF">ebA5990</name>
</gene>
<dbReference type="EMBL" id="CR555306">
    <property type="protein sequence ID" value="CAI09542.1"/>
    <property type="molecule type" value="Genomic_DNA"/>
</dbReference>
<dbReference type="RefSeq" id="WP_011239202.1">
    <property type="nucleotide sequence ID" value="NC_006513.1"/>
</dbReference>
<dbReference type="SMR" id="Q5NZH2"/>
<dbReference type="STRING" id="76114.ebA5990"/>
<dbReference type="KEGG" id="eba:ebA5990"/>
<dbReference type="eggNOG" id="COG0233">
    <property type="taxonomic scope" value="Bacteria"/>
</dbReference>
<dbReference type="HOGENOM" id="CLU_073981_2_0_4"/>
<dbReference type="OrthoDB" id="9804006at2"/>
<dbReference type="Proteomes" id="UP000006552">
    <property type="component" value="Chromosome"/>
</dbReference>
<dbReference type="GO" id="GO:0005829">
    <property type="term" value="C:cytosol"/>
    <property type="evidence" value="ECO:0007669"/>
    <property type="project" value="GOC"/>
</dbReference>
<dbReference type="GO" id="GO:0043023">
    <property type="term" value="F:ribosomal large subunit binding"/>
    <property type="evidence" value="ECO:0007669"/>
    <property type="project" value="TreeGrafter"/>
</dbReference>
<dbReference type="GO" id="GO:0002184">
    <property type="term" value="P:cytoplasmic translational termination"/>
    <property type="evidence" value="ECO:0007669"/>
    <property type="project" value="TreeGrafter"/>
</dbReference>
<dbReference type="CDD" id="cd00520">
    <property type="entry name" value="RRF"/>
    <property type="match status" value="1"/>
</dbReference>
<dbReference type="FunFam" id="1.10.132.20:FF:000001">
    <property type="entry name" value="Ribosome-recycling factor"/>
    <property type="match status" value="1"/>
</dbReference>
<dbReference type="FunFam" id="3.30.1360.40:FF:000001">
    <property type="entry name" value="Ribosome-recycling factor"/>
    <property type="match status" value="1"/>
</dbReference>
<dbReference type="Gene3D" id="3.30.1360.40">
    <property type="match status" value="1"/>
</dbReference>
<dbReference type="Gene3D" id="1.10.132.20">
    <property type="entry name" value="Ribosome-recycling factor"/>
    <property type="match status" value="1"/>
</dbReference>
<dbReference type="HAMAP" id="MF_00040">
    <property type="entry name" value="RRF"/>
    <property type="match status" value="1"/>
</dbReference>
<dbReference type="InterPro" id="IPR002661">
    <property type="entry name" value="Ribosome_recyc_fac"/>
</dbReference>
<dbReference type="InterPro" id="IPR023584">
    <property type="entry name" value="Ribosome_recyc_fac_dom"/>
</dbReference>
<dbReference type="InterPro" id="IPR036191">
    <property type="entry name" value="RRF_sf"/>
</dbReference>
<dbReference type="NCBIfam" id="TIGR00496">
    <property type="entry name" value="frr"/>
    <property type="match status" value="1"/>
</dbReference>
<dbReference type="PANTHER" id="PTHR20982:SF3">
    <property type="entry name" value="MITOCHONDRIAL RIBOSOME RECYCLING FACTOR PSEUDO 1"/>
    <property type="match status" value="1"/>
</dbReference>
<dbReference type="PANTHER" id="PTHR20982">
    <property type="entry name" value="RIBOSOME RECYCLING FACTOR"/>
    <property type="match status" value="1"/>
</dbReference>
<dbReference type="Pfam" id="PF01765">
    <property type="entry name" value="RRF"/>
    <property type="match status" value="1"/>
</dbReference>
<dbReference type="SUPFAM" id="SSF55194">
    <property type="entry name" value="Ribosome recycling factor, RRF"/>
    <property type="match status" value="1"/>
</dbReference>
<feature type="chain" id="PRO_0000167401" description="Ribosome-recycling factor">
    <location>
        <begin position="1"/>
        <end position="185"/>
    </location>
</feature>
<name>RRF_AROAE</name>
<evidence type="ECO:0000255" key="1">
    <source>
        <dbReference type="HAMAP-Rule" id="MF_00040"/>
    </source>
</evidence>
<sequence>MIPELKKTTEQKMQKSIDVLKADLAKVRTGRAHTGLLDHVMVEYYGSMVPISQVSNVTLIDARTIGVQVWEKPMMQKVERAIRDSDLGLNPANQGDIIRVPMPALTEERRRDLTKVVRHEGEAAKVAIRNLRRDANQHLKDAVKDKTISEDDDRRAQEDIQKLTDRNIAEIDKLLAQKEQELMQL</sequence>
<keyword id="KW-0963">Cytoplasm</keyword>
<keyword id="KW-0648">Protein biosynthesis</keyword>
<keyword id="KW-1185">Reference proteome</keyword>
<comment type="function">
    <text evidence="1">Responsible for the release of ribosomes from messenger RNA at the termination of protein biosynthesis. May increase the efficiency of translation by recycling ribosomes from one round of translation to another.</text>
</comment>
<comment type="subcellular location">
    <subcellularLocation>
        <location evidence="1">Cytoplasm</location>
    </subcellularLocation>
</comment>
<comment type="similarity">
    <text evidence="1">Belongs to the RRF family.</text>
</comment>